<feature type="chain" id="PRO_0000379801" description="Transmembrane protein 184 homolog DDB_G0279555">
    <location>
        <begin position="1"/>
        <end position="351"/>
    </location>
</feature>
<feature type="transmembrane region" description="Helical" evidence="2">
    <location>
        <begin position="1"/>
        <end position="21"/>
    </location>
</feature>
<feature type="transmembrane region" description="Helical" evidence="2">
    <location>
        <begin position="39"/>
        <end position="59"/>
    </location>
</feature>
<feature type="transmembrane region" description="Helical" evidence="2">
    <location>
        <begin position="73"/>
        <end position="93"/>
    </location>
</feature>
<feature type="transmembrane region" description="Helical" evidence="2">
    <location>
        <begin position="127"/>
        <end position="147"/>
    </location>
</feature>
<feature type="transmembrane region" description="Helical" evidence="2">
    <location>
        <begin position="162"/>
        <end position="182"/>
    </location>
</feature>
<feature type="transmembrane region" description="Helical" evidence="2">
    <location>
        <begin position="206"/>
        <end position="226"/>
    </location>
</feature>
<feature type="transmembrane region" description="Helical" evidence="2">
    <location>
        <begin position="241"/>
        <end position="261"/>
    </location>
</feature>
<feature type="region of interest" description="Disordered" evidence="3">
    <location>
        <begin position="327"/>
        <end position="351"/>
    </location>
</feature>
<feature type="compositionally biased region" description="Acidic residues" evidence="3">
    <location>
        <begin position="339"/>
        <end position="351"/>
    </location>
</feature>
<feature type="glycosylation site" description="N-linked (GlcNAc...) asparagine" evidence="2">
    <location>
        <position position="26"/>
    </location>
</feature>
<feature type="glycosylation site" description="N-linked (GlcNAc...) asparagine" evidence="2">
    <location>
        <position position="236"/>
    </location>
</feature>
<feature type="glycosylation site" description="N-linked (GlcNAc...) asparagine" evidence="2">
    <location>
        <position position="301"/>
    </location>
</feature>
<feature type="glycosylation site" description="N-linked (GlcNAc...) asparagine" evidence="2">
    <location>
        <position position="304"/>
    </location>
</feature>
<reference key="1">
    <citation type="journal article" date="2005" name="Nature">
        <title>The genome of the social amoeba Dictyostelium discoideum.</title>
        <authorList>
            <person name="Eichinger L."/>
            <person name="Pachebat J.A."/>
            <person name="Gloeckner G."/>
            <person name="Rajandream M.A."/>
            <person name="Sucgang R."/>
            <person name="Berriman M."/>
            <person name="Song J."/>
            <person name="Olsen R."/>
            <person name="Szafranski K."/>
            <person name="Xu Q."/>
            <person name="Tunggal B."/>
            <person name="Kummerfeld S."/>
            <person name="Madera M."/>
            <person name="Konfortov B.A."/>
            <person name="Rivero F."/>
            <person name="Bankier A.T."/>
            <person name="Lehmann R."/>
            <person name="Hamlin N."/>
            <person name="Davies R."/>
            <person name="Gaudet P."/>
            <person name="Fey P."/>
            <person name="Pilcher K."/>
            <person name="Chen G."/>
            <person name="Saunders D."/>
            <person name="Sodergren E.J."/>
            <person name="Davis P."/>
            <person name="Kerhornou A."/>
            <person name="Nie X."/>
            <person name="Hall N."/>
            <person name="Anjard C."/>
            <person name="Hemphill L."/>
            <person name="Bason N."/>
            <person name="Farbrother P."/>
            <person name="Desany B."/>
            <person name="Just E."/>
            <person name="Morio T."/>
            <person name="Rost R."/>
            <person name="Churcher C.M."/>
            <person name="Cooper J."/>
            <person name="Haydock S."/>
            <person name="van Driessche N."/>
            <person name="Cronin A."/>
            <person name="Goodhead I."/>
            <person name="Muzny D.M."/>
            <person name="Mourier T."/>
            <person name="Pain A."/>
            <person name="Lu M."/>
            <person name="Harper D."/>
            <person name="Lindsay R."/>
            <person name="Hauser H."/>
            <person name="James K.D."/>
            <person name="Quiles M."/>
            <person name="Madan Babu M."/>
            <person name="Saito T."/>
            <person name="Buchrieser C."/>
            <person name="Wardroper A."/>
            <person name="Felder M."/>
            <person name="Thangavelu M."/>
            <person name="Johnson D."/>
            <person name="Knights A."/>
            <person name="Loulseged H."/>
            <person name="Mungall K.L."/>
            <person name="Oliver K."/>
            <person name="Price C."/>
            <person name="Quail M.A."/>
            <person name="Urushihara H."/>
            <person name="Hernandez J."/>
            <person name="Rabbinowitsch E."/>
            <person name="Steffen D."/>
            <person name="Sanders M."/>
            <person name="Ma J."/>
            <person name="Kohara Y."/>
            <person name="Sharp S."/>
            <person name="Simmonds M.N."/>
            <person name="Spiegler S."/>
            <person name="Tivey A."/>
            <person name="Sugano S."/>
            <person name="White B."/>
            <person name="Walker D."/>
            <person name="Woodward J.R."/>
            <person name="Winckler T."/>
            <person name="Tanaka Y."/>
            <person name="Shaulsky G."/>
            <person name="Schleicher M."/>
            <person name="Weinstock G.M."/>
            <person name="Rosenthal A."/>
            <person name="Cox E.C."/>
            <person name="Chisholm R.L."/>
            <person name="Gibbs R.A."/>
            <person name="Loomis W.F."/>
            <person name="Platzer M."/>
            <person name="Kay R.R."/>
            <person name="Williams J.G."/>
            <person name="Dear P.H."/>
            <person name="Noegel A.A."/>
            <person name="Barrell B.G."/>
            <person name="Kuspa A."/>
        </authorList>
    </citation>
    <scope>NUCLEOTIDE SEQUENCE [LARGE SCALE GENOMIC DNA]</scope>
    <source>
        <strain>AX4</strain>
    </source>
</reference>
<name>T1843_DICDI</name>
<proteinExistence type="inferred from homology"/>
<organism>
    <name type="scientific">Dictyostelium discoideum</name>
    <name type="common">Social amoeba</name>
    <dbReference type="NCBI Taxonomy" id="44689"/>
    <lineage>
        <taxon>Eukaryota</taxon>
        <taxon>Amoebozoa</taxon>
        <taxon>Evosea</taxon>
        <taxon>Eumycetozoa</taxon>
        <taxon>Dictyostelia</taxon>
        <taxon>Dictyosteliales</taxon>
        <taxon>Dictyosteliaceae</taxon>
        <taxon>Dictyostelium</taxon>
    </lineage>
</organism>
<comment type="function">
    <text evidence="1">Probable transporter.</text>
</comment>
<comment type="subcellular location">
    <subcellularLocation>
        <location evidence="1">Cell membrane</location>
        <topology evidence="1">Multi-pass membrane protein</topology>
    </subcellularLocation>
</comment>
<comment type="similarity">
    <text evidence="4">Belongs to the TMEM184 family.</text>
</comment>
<comment type="caution">
    <text evidence="4">Despite its name, this protein may not be the one-to-one ortholog of TMEM184C.</text>
</comment>
<dbReference type="EMBL" id="AAFI02000031">
    <property type="protein sequence ID" value="EAL67716.1"/>
    <property type="molecule type" value="Genomic_DNA"/>
</dbReference>
<dbReference type="RefSeq" id="XP_641697.1">
    <property type="nucleotide sequence ID" value="XM_636605.1"/>
</dbReference>
<dbReference type="FunCoup" id="Q54WM0">
    <property type="interactions" value="604"/>
</dbReference>
<dbReference type="STRING" id="44689.Q54WM0"/>
<dbReference type="GlyCosmos" id="Q54WM0">
    <property type="glycosylation" value="4 sites, No reported glycans"/>
</dbReference>
<dbReference type="GlyGen" id="Q54WM0">
    <property type="glycosylation" value="4 sites"/>
</dbReference>
<dbReference type="PaxDb" id="44689-DDB0304957"/>
<dbReference type="EnsemblProtists" id="EAL67716">
    <property type="protein sequence ID" value="EAL67716"/>
    <property type="gene ID" value="DDB_G0279555"/>
</dbReference>
<dbReference type="GeneID" id="8622106"/>
<dbReference type="KEGG" id="ddi:DDB_G0279555"/>
<dbReference type="dictyBase" id="DDB_G0279555">
    <property type="gene designation" value="tmem184C"/>
</dbReference>
<dbReference type="VEuPathDB" id="AmoebaDB:DDB_G0279555"/>
<dbReference type="eggNOG" id="KOG2641">
    <property type="taxonomic scope" value="Eukaryota"/>
</dbReference>
<dbReference type="HOGENOM" id="CLU_012923_1_3_1"/>
<dbReference type="InParanoid" id="Q54WM0"/>
<dbReference type="OMA" id="IIKPIMA"/>
<dbReference type="PhylomeDB" id="Q54WM0"/>
<dbReference type="PRO" id="PR:Q54WM0"/>
<dbReference type="Proteomes" id="UP000002195">
    <property type="component" value="Chromosome 3"/>
</dbReference>
<dbReference type="GO" id="GO:0016020">
    <property type="term" value="C:membrane"/>
    <property type="evidence" value="ECO:0000318"/>
    <property type="project" value="GO_Central"/>
</dbReference>
<dbReference type="GO" id="GO:0005886">
    <property type="term" value="C:plasma membrane"/>
    <property type="evidence" value="ECO:0007669"/>
    <property type="project" value="UniProtKB-SubCell"/>
</dbReference>
<dbReference type="GO" id="GO:0022857">
    <property type="term" value="F:transmembrane transporter activity"/>
    <property type="evidence" value="ECO:0000318"/>
    <property type="project" value="GO_Central"/>
</dbReference>
<dbReference type="InterPro" id="IPR005178">
    <property type="entry name" value="Ostalpha/TMEM184C"/>
</dbReference>
<dbReference type="PANTHER" id="PTHR23423">
    <property type="entry name" value="ORGANIC SOLUTE TRANSPORTER-RELATED"/>
    <property type="match status" value="1"/>
</dbReference>
<dbReference type="Pfam" id="PF03619">
    <property type="entry name" value="Solute_trans_a"/>
    <property type="match status" value="1"/>
</dbReference>
<dbReference type="SMART" id="SM01417">
    <property type="entry name" value="Solute_trans_a"/>
    <property type="match status" value="1"/>
</dbReference>
<gene>
    <name type="primary">tmem184C</name>
    <name type="ORF">DDB_G0279555</name>
</gene>
<sequence length="351" mass="40931">MWIVAGVCSGVAILLSFYLIYKHLRNYTNPELQKYIVRILIMVPIYSVDSWLSLRFVELSLYFDVVRDTYEAYVLYCFFSLIVAYIERDFDLVELLHSKEPLPHPFPLTCLPKIKLDRGFLTNCKRFVLQFVFIKPIVAIISLVLETQHKYGEGKFQVGTGYVWLTVVENISVGLSLYFLVLYYKAMEEELKPFKPLGKFLCIKSILFFSFWQSIAISFLVYFGVISPIGSWSVDNISSALQDFITCVEMVILAICHHFFFNYQEFRDPHKVPFIYDKTTKTFFNNPKTNITPIIKNFFTNVTNISDVISDTRETFILPLLSPDHHHNHPTTKKKDEESNLLEPEDKDIII</sequence>
<evidence type="ECO:0000250" key="1"/>
<evidence type="ECO:0000255" key="2"/>
<evidence type="ECO:0000256" key="3">
    <source>
        <dbReference type="SAM" id="MobiDB-lite"/>
    </source>
</evidence>
<evidence type="ECO:0000305" key="4"/>
<protein>
    <recommendedName>
        <fullName>Transmembrane protein 184 homolog DDB_G0279555</fullName>
    </recommendedName>
</protein>
<keyword id="KW-1003">Cell membrane</keyword>
<keyword id="KW-0325">Glycoprotein</keyword>
<keyword id="KW-0472">Membrane</keyword>
<keyword id="KW-1185">Reference proteome</keyword>
<keyword id="KW-0812">Transmembrane</keyword>
<keyword id="KW-1133">Transmembrane helix</keyword>
<keyword id="KW-0813">Transport</keyword>
<accession>Q54WM0</accession>